<evidence type="ECO:0000255" key="1">
    <source>
        <dbReference type="HAMAP-Rule" id="MF_00137"/>
    </source>
</evidence>
<feature type="chain" id="PRO_1000095957" description="Phosphoribosylaminoimidazole-succinocarboxamide synthase">
    <location>
        <begin position="1"/>
        <end position="239"/>
    </location>
</feature>
<keyword id="KW-0067">ATP-binding</keyword>
<keyword id="KW-0436">Ligase</keyword>
<keyword id="KW-0547">Nucleotide-binding</keyword>
<keyword id="KW-0658">Purine biosynthesis</keyword>
<organism>
    <name type="scientific">Acinetobacter baumannii (strain ACICU)</name>
    <dbReference type="NCBI Taxonomy" id="405416"/>
    <lineage>
        <taxon>Bacteria</taxon>
        <taxon>Pseudomonadati</taxon>
        <taxon>Pseudomonadota</taxon>
        <taxon>Gammaproteobacteria</taxon>
        <taxon>Moraxellales</taxon>
        <taxon>Moraxellaceae</taxon>
        <taxon>Acinetobacter</taxon>
        <taxon>Acinetobacter calcoaceticus/baumannii complex</taxon>
    </lineage>
</organism>
<name>PUR7_ACIBC</name>
<reference key="1">
    <citation type="journal article" date="2008" name="Antimicrob. Agents Chemother.">
        <title>Whole-genome pyrosequencing of an epidemic multidrug-resistant Acinetobacter baumannii strain belonging to the European clone II group.</title>
        <authorList>
            <person name="Iacono M."/>
            <person name="Villa L."/>
            <person name="Fortini D."/>
            <person name="Bordoni R."/>
            <person name="Imperi F."/>
            <person name="Bonnal R.J."/>
            <person name="Sicheritz-Ponten T."/>
            <person name="De Bellis G."/>
            <person name="Visca P."/>
            <person name="Cassone A."/>
            <person name="Carattoli A."/>
        </authorList>
    </citation>
    <scope>NUCLEOTIDE SEQUENCE [LARGE SCALE GENOMIC DNA]</scope>
    <source>
        <strain>ACICU</strain>
    </source>
</reference>
<comment type="catalytic activity">
    <reaction evidence="1">
        <text>5-amino-1-(5-phospho-D-ribosyl)imidazole-4-carboxylate + L-aspartate + ATP = (2S)-2-[5-amino-1-(5-phospho-beta-D-ribosyl)imidazole-4-carboxamido]succinate + ADP + phosphate + 2 H(+)</text>
        <dbReference type="Rhea" id="RHEA:22628"/>
        <dbReference type="ChEBI" id="CHEBI:15378"/>
        <dbReference type="ChEBI" id="CHEBI:29991"/>
        <dbReference type="ChEBI" id="CHEBI:30616"/>
        <dbReference type="ChEBI" id="CHEBI:43474"/>
        <dbReference type="ChEBI" id="CHEBI:58443"/>
        <dbReference type="ChEBI" id="CHEBI:77657"/>
        <dbReference type="ChEBI" id="CHEBI:456216"/>
        <dbReference type="EC" id="6.3.2.6"/>
    </reaction>
</comment>
<comment type="pathway">
    <text evidence="1">Purine metabolism; IMP biosynthesis via de novo pathway; 5-amino-1-(5-phospho-D-ribosyl)imidazole-4-carboxamide from 5-amino-1-(5-phospho-D-ribosyl)imidazole-4-carboxylate: step 1/2.</text>
</comment>
<comment type="similarity">
    <text evidence="1">Belongs to the SAICAR synthetase family.</text>
</comment>
<sequence length="239" mass="26958">MLKQTLLYTGKAKSVYETDNADHLILVFRDDASAFNGEKIEQLDRKGKVNNRFNAFIMEKLAEAGIETHFEKLLSPTEVLVKKLQMIPVECVIRNYAAGSLCRRLGVEEGKELTPPTFELFYKDDGLGDPMVNESQAIALGWATAEQLEQMKVLTYKVNDVLKALFAEGNMILVDFKLEFGVFHDRIVLGDEFSPDGCRLWDKDTKKKLDKDRFRQGLGGVVEAYEEVAARLGVDLSDI</sequence>
<protein>
    <recommendedName>
        <fullName evidence="1">Phosphoribosylaminoimidazole-succinocarboxamide synthase</fullName>
        <ecNumber evidence="1">6.3.2.6</ecNumber>
    </recommendedName>
    <alternativeName>
        <fullName evidence="1">SAICAR synthetase</fullName>
    </alternativeName>
</protein>
<accession>B2I2E3</accession>
<gene>
    <name evidence="1" type="primary">purC</name>
    <name type="ordered locus">ACICU_03621</name>
</gene>
<dbReference type="EC" id="6.3.2.6" evidence="1"/>
<dbReference type="EMBL" id="CP000863">
    <property type="protein sequence ID" value="ACC58930.1"/>
    <property type="molecule type" value="Genomic_DNA"/>
</dbReference>
<dbReference type="RefSeq" id="WP_000917863.1">
    <property type="nucleotide sequence ID" value="NZ_CP031380.1"/>
</dbReference>
<dbReference type="SMR" id="B2I2E3"/>
<dbReference type="GeneID" id="92895662"/>
<dbReference type="KEGG" id="abc:ACICU_03621"/>
<dbReference type="HOGENOM" id="CLU_061495_2_0_6"/>
<dbReference type="UniPathway" id="UPA00074">
    <property type="reaction ID" value="UER00131"/>
</dbReference>
<dbReference type="Proteomes" id="UP000008839">
    <property type="component" value="Chromosome"/>
</dbReference>
<dbReference type="GO" id="GO:0005829">
    <property type="term" value="C:cytosol"/>
    <property type="evidence" value="ECO:0007669"/>
    <property type="project" value="TreeGrafter"/>
</dbReference>
<dbReference type="GO" id="GO:0005524">
    <property type="term" value="F:ATP binding"/>
    <property type="evidence" value="ECO:0007669"/>
    <property type="project" value="UniProtKB-KW"/>
</dbReference>
<dbReference type="GO" id="GO:0004639">
    <property type="term" value="F:phosphoribosylaminoimidazolesuccinocarboxamide synthase activity"/>
    <property type="evidence" value="ECO:0007669"/>
    <property type="project" value="UniProtKB-UniRule"/>
</dbReference>
<dbReference type="GO" id="GO:0006189">
    <property type="term" value="P:'de novo' IMP biosynthetic process"/>
    <property type="evidence" value="ECO:0007669"/>
    <property type="project" value="UniProtKB-UniRule"/>
</dbReference>
<dbReference type="GO" id="GO:0009236">
    <property type="term" value="P:cobalamin biosynthetic process"/>
    <property type="evidence" value="ECO:0007669"/>
    <property type="project" value="InterPro"/>
</dbReference>
<dbReference type="CDD" id="cd01415">
    <property type="entry name" value="SAICAR_synt_PurC"/>
    <property type="match status" value="1"/>
</dbReference>
<dbReference type="FunFam" id="3.30.200.20:FF:000086">
    <property type="entry name" value="Phosphoribosylaminoimidazole-succinocarboxamide synthase"/>
    <property type="match status" value="1"/>
</dbReference>
<dbReference type="FunFam" id="3.30.470.20:FF:000006">
    <property type="entry name" value="Phosphoribosylaminoimidazole-succinocarboxamide synthase"/>
    <property type="match status" value="1"/>
</dbReference>
<dbReference type="Gene3D" id="3.30.470.20">
    <property type="entry name" value="ATP-grasp fold, B domain"/>
    <property type="match status" value="1"/>
</dbReference>
<dbReference type="Gene3D" id="3.30.200.20">
    <property type="entry name" value="Phosphorylase Kinase, domain 1"/>
    <property type="match status" value="1"/>
</dbReference>
<dbReference type="HAMAP" id="MF_00137">
    <property type="entry name" value="SAICAR_synth"/>
    <property type="match status" value="1"/>
</dbReference>
<dbReference type="InterPro" id="IPR028923">
    <property type="entry name" value="SAICAR_synt/ADE2_N"/>
</dbReference>
<dbReference type="InterPro" id="IPR033934">
    <property type="entry name" value="SAICAR_synt_PurC"/>
</dbReference>
<dbReference type="InterPro" id="IPR001636">
    <property type="entry name" value="SAICAR_synth"/>
</dbReference>
<dbReference type="InterPro" id="IPR050089">
    <property type="entry name" value="SAICAR_synthetase"/>
</dbReference>
<dbReference type="InterPro" id="IPR018236">
    <property type="entry name" value="SAICAR_synthetase_CS"/>
</dbReference>
<dbReference type="NCBIfam" id="TIGR00081">
    <property type="entry name" value="purC"/>
    <property type="match status" value="1"/>
</dbReference>
<dbReference type="PANTHER" id="PTHR43599">
    <property type="entry name" value="MULTIFUNCTIONAL PROTEIN ADE2"/>
    <property type="match status" value="1"/>
</dbReference>
<dbReference type="PANTHER" id="PTHR43599:SF3">
    <property type="entry name" value="SI:DKEY-6E2.2"/>
    <property type="match status" value="1"/>
</dbReference>
<dbReference type="Pfam" id="PF01259">
    <property type="entry name" value="SAICAR_synt"/>
    <property type="match status" value="1"/>
</dbReference>
<dbReference type="SUPFAM" id="SSF56104">
    <property type="entry name" value="SAICAR synthase-like"/>
    <property type="match status" value="1"/>
</dbReference>
<dbReference type="PROSITE" id="PS01057">
    <property type="entry name" value="SAICAR_SYNTHETASE_1"/>
    <property type="match status" value="1"/>
</dbReference>
<dbReference type="PROSITE" id="PS01058">
    <property type="entry name" value="SAICAR_SYNTHETASE_2"/>
    <property type="match status" value="1"/>
</dbReference>
<proteinExistence type="inferred from homology"/>